<gene>
    <name type="primary">BLS1</name>
    <name type="ordered locus">AER079C</name>
</gene>
<comment type="function">
    <text evidence="1">Component of the biogenesis of lysosome-related organelles complex-1 (BLOC-1), a complex involved in endosomal cargo sorting.</text>
</comment>
<comment type="subunit">
    <text evidence="1">Component of the biogenesis of lysosome-related organelles complex-1 (BLOC-1).</text>
</comment>
<comment type="subcellular location">
    <subcellularLocation>
        <location evidence="1">Endosome</location>
    </subcellularLocation>
</comment>
<comment type="similarity">
    <text evidence="3">Belongs to the BLOC1S1 family.</text>
</comment>
<accession>Q757D4</accession>
<proteinExistence type="inferred from homology"/>
<reference key="1">
    <citation type="journal article" date="2004" name="Science">
        <title>The Ashbya gossypii genome as a tool for mapping the ancient Saccharomyces cerevisiae genome.</title>
        <authorList>
            <person name="Dietrich F.S."/>
            <person name="Voegeli S."/>
            <person name="Brachat S."/>
            <person name="Lerch A."/>
            <person name="Gates K."/>
            <person name="Steiner S."/>
            <person name="Mohr C."/>
            <person name="Poehlmann R."/>
            <person name="Luedi P."/>
            <person name="Choi S."/>
            <person name="Wing R.A."/>
            <person name="Flavier A."/>
            <person name="Gaffney T.D."/>
            <person name="Philippsen P."/>
        </authorList>
    </citation>
    <scope>NUCLEOTIDE SEQUENCE [LARGE SCALE GENOMIC DNA]</scope>
    <source>
        <strain>ATCC 10895 / CBS 109.51 / FGSC 9923 / NRRL Y-1056</strain>
    </source>
</reference>
<reference key="2">
    <citation type="journal article" date="2013" name="G3 (Bethesda)">
        <title>Genomes of Ashbya fungi isolated from insects reveal four mating-type loci, numerous translocations, lack of transposons, and distinct gene duplications.</title>
        <authorList>
            <person name="Dietrich F.S."/>
            <person name="Voegeli S."/>
            <person name="Kuo S."/>
            <person name="Philippsen P."/>
        </authorList>
    </citation>
    <scope>GENOME REANNOTATION</scope>
    <source>
        <strain>ATCC 10895 / CBS 109.51 / FGSC 9923 / NRRL Y-1056</strain>
    </source>
</reference>
<protein>
    <recommendedName>
        <fullName>Biogenesis of lysosome-related organelles complex 1 subunit BLS1</fullName>
        <shortName>BLOC-1 subunit BLS1</shortName>
    </recommendedName>
    <alternativeName>
        <fullName>BLOS1-homolog</fullName>
    </alternativeName>
</protein>
<dbReference type="EMBL" id="AE016818">
    <property type="protein sequence ID" value="AAS52763.1"/>
    <property type="molecule type" value="Genomic_DNA"/>
</dbReference>
<dbReference type="RefSeq" id="NP_984939.1">
    <property type="nucleotide sequence ID" value="NM_210293.1"/>
</dbReference>
<dbReference type="FunCoup" id="Q757D4">
    <property type="interactions" value="21"/>
</dbReference>
<dbReference type="STRING" id="284811.Q757D4"/>
<dbReference type="EnsemblFungi" id="AAS52763">
    <property type="protein sequence ID" value="AAS52763"/>
    <property type="gene ID" value="AGOS_AER079C"/>
</dbReference>
<dbReference type="GeneID" id="4621143"/>
<dbReference type="KEGG" id="ago:AGOS_AER079C"/>
<dbReference type="eggNOG" id="ENOG502S787">
    <property type="taxonomic scope" value="Eukaryota"/>
</dbReference>
<dbReference type="HOGENOM" id="CLU_150164_0_0_1"/>
<dbReference type="InParanoid" id="Q757D4"/>
<dbReference type="OMA" id="IEANHAY"/>
<dbReference type="OrthoDB" id="20018at2759"/>
<dbReference type="Proteomes" id="UP000000591">
    <property type="component" value="Chromosome V"/>
</dbReference>
<dbReference type="GO" id="GO:0031083">
    <property type="term" value="C:BLOC-1 complex"/>
    <property type="evidence" value="ECO:0007669"/>
    <property type="project" value="EnsemblFungi"/>
</dbReference>
<dbReference type="GO" id="GO:0005768">
    <property type="term" value="C:endosome"/>
    <property type="evidence" value="ECO:0007669"/>
    <property type="project" value="UniProtKB-SubCell"/>
</dbReference>
<dbReference type="GO" id="GO:0007032">
    <property type="term" value="P:endosome organization"/>
    <property type="evidence" value="ECO:0007669"/>
    <property type="project" value="EnsemblFungi"/>
</dbReference>
<dbReference type="GO" id="GO:0032880">
    <property type="term" value="P:regulation of protein localization"/>
    <property type="evidence" value="ECO:0007669"/>
    <property type="project" value="EnsemblFungi"/>
</dbReference>
<sequence length="117" mass="13692">MELDQDVNRIIKSKTATKVSAMQAEIEANHAYIYDVQLKKLLRLHDEELQERCHTPLRKLYAKYSSRAEGNRDLQTWAEHVERDLRLLETTLRLVREGKAQDTEQAPGKGDRIFRSD</sequence>
<organism>
    <name type="scientific">Eremothecium gossypii (strain ATCC 10895 / CBS 109.51 / FGSC 9923 / NRRL Y-1056)</name>
    <name type="common">Yeast</name>
    <name type="synonym">Ashbya gossypii</name>
    <dbReference type="NCBI Taxonomy" id="284811"/>
    <lineage>
        <taxon>Eukaryota</taxon>
        <taxon>Fungi</taxon>
        <taxon>Dikarya</taxon>
        <taxon>Ascomycota</taxon>
        <taxon>Saccharomycotina</taxon>
        <taxon>Saccharomycetes</taxon>
        <taxon>Saccharomycetales</taxon>
        <taxon>Saccharomycetaceae</taxon>
        <taxon>Eremothecium</taxon>
    </lineage>
</organism>
<feature type="chain" id="PRO_0000410628" description="Biogenesis of lysosome-related organelles complex 1 subunit BLS1">
    <location>
        <begin position="1"/>
        <end position="117"/>
    </location>
</feature>
<feature type="region of interest" description="Disordered" evidence="2">
    <location>
        <begin position="97"/>
        <end position="117"/>
    </location>
</feature>
<evidence type="ECO:0000250" key="1"/>
<evidence type="ECO:0000256" key="2">
    <source>
        <dbReference type="SAM" id="MobiDB-lite"/>
    </source>
</evidence>
<evidence type="ECO:0000305" key="3"/>
<name>BL1S1_EREGS</name>
<keyword id="KW-0967">Endosome</keyword>
<keyword id="KW-1185">Reference proteome</keyword>
<keyword id="KW-0813">Transport</keyword>